<comment type="function">
    <text evidence="1">One of the early assembly proteins it binds 23S rRNA. One of the proteins that surrounds the polypeptide exit tunnel on the outside of the ribosome. Forms the main docking site for trigger factor binding to the ribosome.</text>
</comment>
<comment type="subunit">
    <text evidence="1">Part of the 50S ribosomal subunit. Contacts protein L29, and trigger factor when it is bound to the ribosome.</text>
</comment>
<comment type="similarity">
    <text evidence="1">Belongs to the universal ribosomal protein uL23 family.</text>
</comment>
<feature type="chain" id="PRO_1000068111" description="Large ribosomal subunit protein uL23">
    <location>
        <begin position="1"/>
        <end position="100"/>
    </location>
</feature>
<evidence type="ECO:0000255" key="1">
    <source>
        <dbReference type="HAMAP-Rule" id="MF_01369"/>
    </source>
</evidence>
<evidence type="ECO:0000305" key="2"/>
<organism>
    <name type="scientific">Mycobacterium bovis (strain BCG / Pasteur 1173P2)</name>
    <dbReference type="NCBI Taxonomy" id="410289"/>
    <lineage>
        <taxon>Bacteria</taxon>
        <taxon>Bacillati</taxon>
        <taxon>Actinomycetota</taxon>
        <taxon>Actinomycetes</taxon>
        <taxon>Mycobacteriales</taxon>
        <taxon>Mycobacteriaceae</taxon>
        <taxon>Mycobacterium</taxon>
        <taxon>Mycobacterium tuberculosis complex</taxon>
    </lineage>
</organism>
<accession>A1KGI4</accession>
<name>RL23_MYCBP</name>
<keyword id="KW-0687">Ribonucleoprotein</keyword>
<keyword id="KW-0689">Ribosomal protein</keyword>
<keyword id="KW-0694">RNA-binding</keyword>
<keyword id="KW-0699">rRNA-binding</keyword>
<proteinExistence type="inferred from homology"/>
<sequence length="100" mass="10958">MATLADPRDIILAPVISEKSYGLLDDNVYTFLVRPDSNKTQIKIAVEKIFAVKVASVNTANRQGKRKRTRTGYGKRKSTKRAIVTLAPGSRPIDLFGAPA</sequence>
<dbReference type="EMBL" id="AM408590">
    <property type="protein sequence ID" value="CAL70739.1"/>
    <property type="molecule type" value="Genomic_DNA"/>
</dbReference>
<dbReference type="RefSeq" id="WP_003403581.1">
    <property type="nucleotide sequence ID" value="NC_008769.1"/>
</dbReference>
<dbReference type="SMR" id="A1KGI4"/>
<dbReference type="KEGG" id="mbb:BCG_0753"/>
<dbReference type="HOGENOM" id="CLU_037562_3_2_11"/>
<dbReference type="Proteomes" id="UP000001472">
    <property type="component" value="Chromosome"/>
</dbReference>
<dbReference type="GO" id="GO:1990904">
    <property type="term" value="C:ribonucleoprotein complex"/>
    <property type="evidence" value="ECO:0007669"/>
    <property type="project" value="UniProtKB-KW"/>
</dbReference>
<dbReference type="GO" id="GO:0005840">
    <property type="term" value="C:ribosome"/>
    <property type="evidence" value="ECO:0007669"/>
    <property type="project" value="UniProtKB-KW"/>
</dbReference>
<dbReference type="GO" id="GO:0019843">
    <property type="term" value="F:rRNA binding"/>
    <property type="evidence" value="ECO:0007669"/>
    <property type="project" value="UniProtKB-UniRule"/>
</dbReference>
<dbReference type="GO" id="GO:0003735">
    <property type="term" value="F:structural constituent of ribosome"/>
    <property type="evidence" value="ECO:0007669"/>
    <property type="project" value="InterPro"/>
</dbReference>
<dbReference type="GO" id="GO:0006412">
    <property type="term" value="P:translation"/>
    <property type="evidence" value="ECO:0007669"/>
    <property type="project" value="UniProtKB-UniRule"/>
</dbReference>
<dbReference type="FunFam" id="3.30.70.330:FF:000001">
    <property type="entry name" value="50S ribosomal protein L23"/>
    <property type="match status" value="1"/>
</dbReference>
<dbReference type="Gene3D" id="3.30.70.330">
    <property type="match status" value="1"/>
</dbReference>
<dbReference type="HAMAP" id="MF_01369_B">
    <property type="entry name" value="Ribosomal_uL23_B"/>
    <property type="match status" value="1"/>
</dbReference>
<dbReference type="InterPro" id="IPR012677">
    <property type="entry name" value="Nucleotide-bd_a/b_plait_sf"/>
</dbReference>
<dbReference type="InterPro" id="IPR013025">
    <property type="entry name" value="Ribosomal_uL23-like"/>
</dbReference>
<dbReference type="InterPro" id="IPR012678">
    <property type="entry name" value="Ribosomal_uL23/eL15/eS24_sf"/>
</dbReference>
<dbReference type="InterPro" id="IPR001014">
    <property type="entry name" value="Ribosomal_uL23_CS"/>
</dbReference>
<dbReference type="NCBIfam" id="NF004363">
    <property type="entry name" value="PRK05738.2-4"/>
    <property type="match status" value="1"/>
</dbReference>
<dbReference type="NCBIfam" id="NF004364">
    <property type="entry name" value="PRK05738.2-5"/>
    <property type="match status" value="1"/>
</dbReference>
<dbReference type="PANTHER" id="PTHR11620">
    <property type="entry name" value="60S RIBOSOMAL PROTEIN L23A"/>
    <property type="match status" value="1"/>
</dbReference>
<dbReference type="Pfam" id="PF00276">
    <property type="entry name" value="Ribosomal_L23"/>
    <property type="match status" value="1"/>
</dbReference>
<dbReference type="SUPFAM" id="SSF54189">
    <property type="entry name" value="Ribosomal proteins S24e, L23 and L15e"/>
    <property type="match status" value="1"/>
</dbReference>
<dbReference type="PROSITE" id="PS00050">
    <property type="entry name" value="RIBOSOMAL_L23"/>
    <property type="match status" value="1"/>
</dbReference>
<reference key="1">
    <citation type="journal article" date="2007" name="Proc. Natl. Acad. Sci. U.S.A.">
        <title>Genome plasticity of BCG and impact on vaccine efficacy.</title>
        <authorList>
            <person name="Brosch R."/>
            <person name="Gordon S.V."/>
            <person name="Garnier T."/>
            <person name="Eiglmeier K."/>
            <person name="Frigui W."/>
            <person name="Valenti P."/>
            <person name="Dos Santos S."/>
            <person name="Duthoy S."/>
            <person name="Lacroix C."/>
            <person name="Garcia-Pelayo C."/>
            <person name="Inwald J.K."/>
            <person name="Golby P."/>
            <person name="Garcia J.N."/>
            <person name="Hewinson R.G."/>
            <person name="Behr M.A."/>
            <person name="Quail M.A."/>
            <person name="Churcher C."/>
            <person name="Barrell B.G."/>
            <person name="Parkhill J."/>
            <person name="Cole S.T."/>
        </authorList>
    </citation>
    <scope>NUCLEOTIDE SEQUENCE [LARGE SCALE GENOMIC DNA]</scope>
    <source>
        <strain>BCG / Pasteur 1173P2</strain>
    </source>
</reference>
<gene>
    <name evidence="1" type="primary">rplW</name>
    <name type="ordered locus">BCG_0753</name>
</gene>
<protein>
    <recommendedName>
        <fullName evidence="1">Large ribosomal subunit protein uL23</fullName>
    </recommendedName>
    <alternativeName>
        <fullName evidence="2">50S ribosomal protein L23</fullName>
    </alternativeName>
</protein>